<protein>
    <recommendedName>
        <fullName evidence="1">tRNA (guanine-N(1)-)-methyltransferase</fullName>
        <ecNumber evidence="1">2.1.1.228</ecNumber>
    </recommendedName>
    <alternativeName>
        <fullName evidence="1">M1G-methyltransferase</fullName>
    </alternativeName>
    <alternativeName>
        <fullName evidence="1">tRNA [GM37] methyltransferase</fullName>
    </alternativeName>
</protein>
<sequence length="227" mass="25097">MRIDIVTLFPEFFVSPLQCSLLARAIAGGVCNIAITNPRDFAADRYRTVDDTPYGGGAGMVLKPEPLFAAVESLPIIAPRAVILLTPQGRPLKQVFLRSLAADYAQLVLLCGHYEGVDERVRAHLATHEISLGDFVLTGGEIPALALIDGIVRLLPGTVGNRASLESESFEDNLLEYPQYTRPADFRGWQVPEVLLSGHHAQIAHWRREQQLTRTRERRPDLLPPEA</sequence>
<accession>Q7MBC8</accession>
<organism>
    <name type="scientific">Gloeobacter violaceus (strain ATCC 29082 / PCC 7421)</name>
    <dbReference type="NCBI Taxonomy" id="251221"/>
    <lineage>
        <taxon>Bacteria</taxon>
        <taxon>Bacillati</taxon>
        <taxon>Cyanobacteriota</taxon>
        <taxon>Cyanophyceae</taxon>
        <taxon>Gloeobacterales</taxon>
        <taxon>Gloeobacteraceae</taxon>
        <taxon>Gloeobacter</taxon>
    </lineage>
</organism>
<reference key="1">
    <citation type="journal article" date="2003" name="DNA Res.">
        <title>Complete genome structure of Gloeobacter violaceus PCC 7421, a cyanobacterium that lacks thylakoids.</title>
        <authorList>
            <person name="Nakamura Y."/>
            <person name="Kaneko T."/>
            <person name="Sato S."/>
            <person name="Mimuro M."/>
            <person name="Miyashita H."/>
            <person name="Tsuchiya T."/>
            <person name="Sasamoto S."/>
            <person name="Watanabe A."/>
            <person name="Kawashima K."/>
            <person name="Kishida Y."/>
            <person name="Kiyokawa C."/>
            <person name="Kohara M."/>
            <person name="Matsumoto M."/>
            <person name="Matsuno A."/>
            <person name="Nakazaki N."/>
            <person name="Shimpo S."/>
            <person name="Takeuchi C."/>
            <person name="Yamada M."/>
            <person name="Tabata S."/>
        </authorList>
    </citation>
    <scope>NUCLEOTIDE SEQUENCE [LARGE SCALE GENOMIC DNA]</scope>
    <source>
        <strain>ATCC 29082 / PCC 7421</strain>
    </source>
</reference>
<name>TRMD_GLOVI</name>
<feature type="chain" id="PRO_0000060382" description="tRNA (guanine-N(1)-)-methyltransferase">
    <location>
        <begin position="1"/>
        <end position="227"/>
    </location>
</feature>
<feature type="binding site" evidence="1">
    <location>
        <position position="112"/>
    </location>
    <ligand>
        <name>S-adenosyl-L-methionine</name>
        <dbReference type="ChEBI" id="CHEBI:59789"/>
    </ligand>
</feature>
<feature type="binding site" evidence="1">
    <location>
        <begin position="132"/>
        <end position="137"/>
    </location>
    <ligand>
        <name>S-adenosyl-L-methionine</name>
        <dbReference type="ChEBI" id="CHEBI:59789"/>
    </ligand>
</feature>
<proteinExistence type="inferred from homology"/>
<evidence type="ECO:0000255" key="1">
    <source>
        <dbReference type="HAMAP-Rule" id="MF_00605"/>
    </source>
</evidence>
<comment type="function">
    <text evidence="1">Specifically methylates guanosine-37 in various tRNAs.</text>
</comment>
<comment type="catalytic activity">
    <reaction evidence="1">
        <text>guanosine(37) in tRNA + S-adenosyl-L-methionine = N(1)-methylguanosine(37) in tRNA + S-adenosyl-L-homocysteine + H(+)</text>
        <dbReference type="Rhea" id="RHEA:36899"/>
        <dbReference type="Rhea" id="RHEA-COMP:10145"/>
        <dbReference type="Rhea" id="RHEA-COMP:10147"/>
        <dbReference type="ChEBI" id="CHEBI:15378"/>
        <dbReference type="ChEBI" id="CHEBI:57856"/>
        <dbReference type="ChEBI" id="CHEBI:59789"/>
        <dbReference type="ChEBI" id="CHEBI:73542"/>
        <dbReference type="ChEBI" id="CHEBI:74269"/>
        <dbReference type="EC" id="2.1.1.228"/>
    </reaction>
</comment>
<comment type="subunit">
    <text evidence="1">Homodimer.</text>
</comment>
<comment type="subcellular location">
    <subcellularLocation>
        <location evidence="1">Cytoplasm</location>
    </subcellularLocation>
</comment>
<comment type="similarity">
    <text evidence="1">Belongs to the RNA methyltransferase TrmD family.</text>
</comment>
<keyword id="KW-0963">Cytoplasm</keyword>
<keyword id="KW-0489">Methyltransferase</keyword>
<keyword id="KW-1185">Reference proteome</keyword>
<keyword id="KW-0949">S-adenosyl-L-methionine</keyword>
<keyword id="KW-0808">Transferase</keyword>
<keyword id="KW-0819">tRNA processing</keyword>
<dbReference type="EC" id="2.1.1.228" evidence="1"/>
<dbReference type="EMBL" id="BA000045">
    <property type="protein sequence ID" value="BAC88830.1"/>
    <property type="molecule type" value="Genomic_DNA"/>
</dbReference>
<dbReference type="RefSeq" id="NP_923835.1">
    <property type="nucleotide sequence ID" value="NC_005125.1"/>
</dbReference>
<dbReference type="RefSeq" id="WP_011140891.1">
    <property type="nucleotide sequence ID" value="NC_005125.1"/>
</dbReference>
<dbReference type="SMR" id="Q7MBC8"/>
<dbReference type="FunCoup" id="Q7MBC8">
    <property type="interactions" value="127"/>
</dbReference>
<dbReference type="STRING" id="251221.gene:10758367"/>
<dbReference type="EnsemblBacteria" id="BAC88830">
    <property type="protein sequence ID" value="BAC88830"/>
    <property type="gene ID" value="BAC88830"/>
</dbReference>
<dbReference type="KEGG" id="gvi:glr0889"/>
<dbReference type="PATRIC" id="fig|251221.4.peg.908"/>
<dbReference type="eggNOG" id="COG0336">
    <property type="taxonomic scope" value="Bacteria"/>
</dbReference>
<dbReference type="HOGENOM" id="CLU_047363_0_1_3"/>
<dbReference type="InParanoid" id="Q7MBC8"/>
<dbReference type="OrthoDB" id="9807416at2"/>
<dbReference type="PhylomeDB" id="Q7MBC8"/>
<dbReference type="Proteomes" id="UP000000557">
    <property type="component" value="Chromosome"/>
</dbReference>
<dbReference type="GO" id="GO:0005829">
    <property type="term" value="C:cytosol"/>
    <property type="evidence" value="ECO:0000318"/>
    <property type="project" value="GO_Central"/>
</dbReference>
<dbReference type="GO" id="GO:0052906">
    <property type="term" value="F:tRNA (guanine(37)-N1)-methyltransferase activity"/>
    <property type="evidence" value="ECO:0000318"/>
    <property type="project" value="GO_Central"/>
</dbReference>
<dbReference type="GO" id="GO:0002939">
    <property type="term" value="P:tRNA N1-guanine methylation"/>
    <property type="evidence" value="ECO:0000318"/>
    <property type="project" value="GO_Central"/>
</dbReference>
<dbReference type="CDD" id="cd18080">
    <property type="entry name" value="TrmD-like"/>
    <property type="match status" value="1"/>
</dbReference>
<dbReference type="FunFam" id="1.10.1270.20:FF:000004">
    <property type="entry name" value="tRNA (guanine-N(1)-)-methyltransferase"/>
    <property type="match status" value="1"/>
</dbReference>
<dbReference type="FunFam" id="3.40.1280.10:FF:000001">
    <property type="entry name" value="tRNA (guanine-N(1)-)-methyltransferase"/>
    <property type="match status" value="1"/>
</dbReference>
<dbReference type="Gene3D" id="3.40.1280.10">
    <property type="match status" value="1"/>
</dbReference>
<dbReference type="Gene3D" id="1.10.1270.20">
    <property type="entry name" value="tRNA(m1g37)methyltransferase, domain 2"/>
    <property type="match status" value="1"/>
</dbReference>
<dbReference type="HAMAP" id="MF_00605">
    <property type="entry name" value="TrmD"/>
    <property type="match status" value="1"/>
</dbReference>
<dbReference type="InterPro" id="IPR029028">
    <property type="entry name" value="Alpha/beta_knot_MTases"/>
</dbReference>
<dbReference type="InterPro" id="IPR023148">
    <property type="entry name" value="tRNA_m1G_MeTrfase_C_sf"/>
</dbReference>
<dbReference type="InterPro" id="IPR002649">
    <property type="entry name" value="tRNA_m1G_MeTrfase_TrmD"/>
</dbReference>
<dbReference type="InterPro" id="IPR029026">
    <property type="entry name" value="tRNA_m1G_MTases_N"/>
</dbReference>
<dbReference type="InterPro" id="IPR016009">
    <property type="entry name" value="tRNA_MeTrfase_TRMD/TRM10"/>
</dbReference>
<dbReference type="NCBIfam" id="NF000648">
    <property type="entry name" value="PRK00026.1"/>
    <property type="match status" value="1"/>
</dbReference>
<dbReference type="NCBIfam" id="TIGR00088">
    <property type="entry name" value="trmD"/>
    <property type="match status" value="1"/>
</dbReference>
<dbReference type="PANTHER" id="PTHR46417">
    <property type="entry name" value="TRNA (GUANINE-N(1)-)-METHYLTRANSFERASE"/>
    <property type="match status" value="1"/>
</dbReference>
<dbReference type="PANTHER" id="PTHR46417:SF1">
    <property type="entry name" value="TRNA (GUANINE-N(1)-)-METHYLTRANSFERASE"/>
    <property type="match status" value="1"/>
</dbReference>
<dbReference type="Pfam" id="PF01746">
    <property type="entry name" value="tRNA_m1G_MT"/>
    <property type="match status" value="1"/>
</dbReference>
<dbReference type="PIRSF" id="PIRSF000386">
    <property type="entry name" value="tRNA_mtase"/>
    <property type="match status" value="1"/>
</dbReference>
<dbReference type="SUPFAM" id="SSF75217">
    <property type="entry name" value="alpha/beta knot"/>
    <property type="match status" value="1"/>
</dbReference>
<gene>
    <name evidence="1" type="primary">trmD</name>
    <name type="ordered locus">glr0889</name>
</gene>